<feature type="chain" id="PRO_1000190763" description="Thymidylate kinase">
    <location>
        <begin position="1"/>
        <end position="213"/>
    </location>
</feature>
<feature type="binding site" evidence="1">
    <location>
        <begin position="10"/>
        <end position="17"/>
    </location>
    <ligand>
        <name>ATP</name>
        <dbReference type="ChEBI" id="CHEBI:30616"/>
    </ligand>
</feature>
<proteinExistence type="inferred from homology"/>
<protein>
    <recommendedName>
        <fullName evidence="1">Thymidylate kinase</fullName>
        <ecNumber evidence="1">2.7.4.9</ecNumber>
    </recommendedName>
    <alternativeName>
        <fullName evidence="1">dTMP kinase</fullName>
    </alternativeName>
</protein>
<comment type="function">
    <text evidence="1">Phosphorylation of dTMP to form dTDP in both de novo and salvage pathways of dTTP synthesis.</text>
</comment>
<comment type="catalytic activity">
    <reaction evidence="1">
        <text>dTMP + ATP = dTDP + ADP</text>
        <dbReference type="Rhea" id="RHEA:13517"/>
        <dbReference type="ChEBI" id="CHEBI:30616"/>
        <dbReference type="ChEBI" id="CHEBI:58369"/>
        <dbReference type="ChEBI" id="CHEBI:63528"/>
        <dbReference type="ChEBI" id="CHEBI:456216"/>
        <dbReference type="EC" id="2.7.4.9"/>
    </reaction>
</comment>
<comment type="similarity">
    <text evidence="1">Belongs to the thymidylate kinase family.</text>
</comment>
<dbReference type="EC" id="2.7.4.9" evidence="1"/>
<dbReference type="EMBL" id="CU928161">
    <property type="protein sequence ID" value="CAR02438.1"/>
    <property type="molecule type" value="Genomic_DNA"/>
</dbReference>
<dbReference type="RefSeq" id="WP_001257012.1">
    <property type="nucleotide sequence ID" value="NC_011742.1"/>
</dbReference>
<dbReference type="SMR" id="B7MJ85"/>
<dbReference type="KEGG" id="ecz:ECS88_1112"/>
<dbReference type="HOGENOM" id="CLU_049131_0_1_6"/>
<dbReference type="Proteomes" id="UP000000747">
    <property type="component" value="Chromosome"/>
</dbReference>
<dbReference type="GO" id="GO:0005829">
    <property type="term" value="C:cytosol"/>
    <property type="evidence" value="ECO:0007669"/>
    <property type="project" value="TreeGrafter"/>
</dbReference>
<dbReference type="GO" id="GO:0005524">
    <property type="term" value="F:ATP binding"/>
    <property type="evidence" value="ECO:0007669"/>
    <property type="project" value="UniProtKB-UniRule"/>
</dbReference>
<dbReference type="GO" id="GO:0004798">
    <property type="term" value="F:dTMP kinase activity"/>
    <property type="evidence" value="ECO:0007669"/>
    <property type="project" value="UniProtKB-UniRule"/>
</dbReference>
<dbReference type="GO" id="GO:0006233">
    <property type="term" value="P:dTDP biosynthetic process"/>
    <property type="evidence" value="ECO:0007669"/>
    <property type="project" value="InterPro"/>
</dbReference>
<dbReference type="GO" id="GO:0006235">
    <property type="term" value="P:dTTP biosynthetic process"/>
    <property type="evidence" value="ECO:0007669"/>
    <property type="project" value="UniProtKB-UniRule"/>
</dbReference>
<dbReference type="GO" id="GO:0006227">
    <property type="term" value="P:dUDP biosynthetic process"/>
    <property type="evidence" value="ECO:0007669"/>
    <property type="project" value="TreeGrafter"/>
</dbReference>
<dbReference type="CDD" id="cd01672">
    <property type="entry name" value="TMPK"/>
    <property type="match status" value="1"/>
</dbReference>
<dbReference type="FunFam" id="3.40.50.300:FF:000321">
    <property type="entry name" value="Thymidylate kinase"/>
    <property type="match status" value="1"/>
</dbReference>
<dbReference type="Gene3D" id="3.40.50.300">
    <property type="entry name" value="P-loop containing nucleotide triphosphate hydrolases"/>
    <property type="match status" value="1"/>
</dbReference>
<dbReference type="HAMAP" id="MF_00165">
    <property type="entry name" value="Thymidylate_kinase"/>
    <property type="match status" value="1"/>
</dbReference>
<dbReference type="InterPro" id="IPR027417">
    <property type="entry name" value="P-loop_NTPase"/>
</dbReference>
<dbReference type="InterPro" id="IPR039430">
    <property type="entry name" value="Thymidylate_kin-like_dom"/>
</dbReference>
<dbReference type="InterPro" id="IPR018095">
    <property type="entry name" value="Thymidylate_kin_CS"/>
</dbReference>
<dbReference type="InterPro" id="IPR018094">
    <property type="entry name" value="Thymidylate_kinase"/>
</dbReference>
<dbReference type="NCBIfam" id="TIGR00041">
    <property type="entry name" value="DTMP_kinase"/>
    <property type="match status" value="1"/>
</dbReference>
<dbReference type="PANTHER" id="PTHR10344">
    <property type="entry name" value="THYMIDYLATE KINASE"/>
    <property type="match status" value="1"/>
</dbReference>
<dbReference type="PANTHER" id="PTHR10344:SF4">
    <property type="entry name" value="UMP-CMP KINASE 2, MITOCHONDRIAL"/>
    <property type="match status" value="1"/>
</dbReference>
<dbReference type="Pfam" id="PF02223">
    <property type="entry name" value="Thymidylate_kin"/>
    <property type="match status" value="1"/>
</dbReference>
<dbReference type="SUPFAM" id="SSF52540">
    <property type="entry name" value="P-loop containing nucleoside triphosphate hydrolases"/>
    <property type="match status" value="1"/>
</dbReference>
<dbReference type="PROSITE" id="PS01331">
    <property type="entry name" value="THYMIDYLATE_KINASE"/>
    <property type="match status" value="1"/>
</dbReference>
<gene>
    <name evidence="1" type="primary">tmk</name>
    <name type="ordered locus">ECS88_1112</name>
</gene>
<keyword id="KW-0067">ATP-binding</keyword>
<keyword id="KW-0418">Kinase</keyword>
<keyword id="KW-0545">Nucleotide biosynthesis</keyword>
<keyword id="KW-0547">Nucleotide-binding</keyword>
<keyword id="KW-1185">Reference proteome</keyword>
<keyword id="KW-0808">Transferase</keyword>
<evidence type="ECO:0000255" key="1">
    <source>
        <dbReference type="HAMAP-Rule" id="MF_00165"/>
    </source>
</evidence>
<organism>
    <name type="scientific">Escherichia coli O45:K1 (strain S88 / ExPEC)</name>
    <dbReference type="NCBI Taxonomy" id="585035"/>
    <lineage>
        <taxon>Bacteria</taxon>
        <taxon>Pseudomonadati</taxon>
        <taxon>Pseudomonadota</taxon>
        <taxon>Gammaproteobacteria</taxon>
        <taxon>Enterobacterales</taxon>
        <taxon>Enterobacteriaceae</taxon>
        <taxon>Escherichia</taxon>
    </lineage>
</organism>
<accession>B7MJ85</accession>
<sequence>MRSKYIVIEGLEGAGKTTARNVVVETLEQLGIRDMVFTREPGGTQLAEKLRSLVLDIKSVGDEVITDKAEVLMFYAARVQLVETVIKPALANGTWVIGDRHDLSTQAYQGGGRGIDQHMLATLRDAVLGGFRPDLTLYLDVTPEVGLKRARARGELDRIEQESFDFFNRTRARYLELAAQDKSIHTIDATQPLEAVMDAIRTTVTNWVKELDA</sequence>
<reference key="1">
    <citation type="journal article" date="2009" name="PLoS Genet.">
        <title>Organised genome dynamics in the Escherichia coli species results in highly diverse adaptive paths.</title>
        <authorList>
            <person name="Touchon M."/>
            <person name="Hoede C."/>
            <person name="Tenaillon O."/>
            <person name="Barbe V."/>
            <person name="Baeriswyl S."/>
            <person name="Bidet P."/>
            <person name="Bingen E."/>
            <person name="Bonacorsi S."/>
            <person name="Bouchier C."/>
            <person name="Bouvet O."/>
            <person name="Calteau A."/>
            <person name="Chiapello H."/>
            <person name="Clermont O."/>
            <person name="Cruveiller S."/>
            <person name="Danchin A."/>
            <person name="Diard M."/>
            <person name="Dossat C."/>
            <person name="Karoui M.E."/>
            <person name="Frapy E."/>
            <person name="Garry L."/>
            <person name="Ghigo J.M."/>
            <person name="Gilles A.M."/>
            <person name="Johnson J."/>
            <person name="Le Bouguenec C."/>
            <person name="Lescat M."/>
            <person name="Mangenot S."/>
            <person name="Martinez-Jehanne V."/>
            <person name="Matic I."/>
            <person name="Nassif X."/>
            <person name="Oztas S."/>
            <person name="Petit M.A."/>
            <person name="Pichon C."/>
            <person name="Rouy Z."/>
            <person name="Ruf C.S."/>
            <person name="Schneider D."/>
            <person name="Tourret J."/>
            <person name="Vacherie B."/>
            <person name="Vallenet D."/>
            <person name="Medigue C."/>
            <person name="Rocha E.P.C."/>
            <person name="Denamur E."/>
        </authorList>
    </citation>
    <scope>NUCLEOTIDE SEQUENCE [LARGE SCALE GENOMIC DNA]</scope>
    <source>
        <strain>S88 / ExPEC</strain>
    </source>
</reference>
<name>KTHY_ECO45</name>